<proteinExistence type="inferred from homology"/>
<sequence length="256" mass="28340">MSDPRKAQEQEPTTHFGFQDVPESQKAEKVAEVFHSVAAKYDLMNDVLSGGLHRLWKRFTIELSGVRPGNRVLDIAGGTGDLTRKFASIVGPTGEVVLADINDSMLKVGRDRLLDKGVAGNVQFVQADAEKLPFPDNHFDVVTIAFGLRNVTHKEDALRSMLRVLKPGGRLLVLEFSKPGNPLLAKVYDTYSFSFMPLAGKLITNDADSYRYLAESIRMHPDQETLKAMMVDAGFERVTYHNMTGGIVALHRGIKP</sequence>
<reference key="1">
    <citation type="submission" date="2007-04" db="EMBL/GenBank/DDBJ databases">
        <title>Complete sequence of Pseudomonas mendocina ymp.</title>
        <authorList>
            <consortium name="US DOE Joint Genome Institute"/>
            <person name="Copeland A."/>
            <person name="Lucas S."/>
            <person name="Lapidus A."/>
            <person name="Barry K."/>
            <person name="Glavina del Rio T."/>
            <person name="Dalin E."/>
            <person name="Tice H."/>
            <person name="Pitluck S."/>
            <person name="Kiss H."/>
            <person name="Brettin T."/>
            <person name="Detter J.C."/>
            <person name="Bruce D."/>
            <person name="Han C."/>
            <person name="Schmutz J."/>
            <person name="Larimer F."/>
            <person name="Land M."/>
            <person name="Hauser L."/>
            <person name="Kyrpides N."/>
            <person name="Mikhailova N."/>
            <person name="Hersman L."/>
            <person name="Dubois J."/>
            <person name="Maurice P."/>
            <person name="Richardson P."/>
        </authorList>
    </citation>
    <scope>NUCLEOTIDE SEQUENCE [LARGE SCALE GENOMIC DNA]</scope>
    <source>
        <strain>ymp</strain>
    </source>
</reference>
<accession>A4XPM7</accession>
<protein>
    <recommendedName>
        <fullName evidence="1">Ubiquinone/menaquinone biosynthesis C-methyltransferase UbiE</fullName>
        <ecNumber evidence="1">2.1.1.163</ecNumber>
        <ecNumber evidence="1">2.1.1.201</ecNumber>
    </recommendedName>
    <alternativeName>
        <fullName evidence="1">2-methoxy-6-polyprenyl-1,4-benzoquinol methylase</fullName>
    </alternativeName>
    <alternativeName>
        <fullName evidence="1">Demethylmenaquinone methyltransferase</fullName>
    </alternativeName>
</protein>
<evidence type="ECO:0000255" key="1">
    <source>
        <dbReference type="HAMAP-Rule" id="MF_01813"/>
    </source>
</evidence>
<gene>
    <name evidence="1" type="primary">ubiE</name>
    <name type="ordered locus">Pmen_0523</name>
</gene>
<dbReference type="EC" id="2.1.1.163" evidence="1"/>
<dbReference type="EC" id="2.1.1.201" evidence="1"/>
<dbReference type="EMBL" id="CP000680">
    <property type="protein sequence ID" value="ABP83293.1"/>
    <property type="molecule type" value="Genomic_DNA"/>
</dbReference>
<dbReference type="SMR" id="A4XPM7"/>
<dbReference type="STRING" id="399739.Pmen_0523"/>
<dbReference type="KEGG" id="pmy:Pmen_0523"/>
<dbReference type="PATRIC" id="fig|399739.8.peg.531"/>
<dbReference type="eggNOG" id="COG2226">
    <property type="taxonomic scope" value="Bacteria"/>
</dbReference>
<dbReference type="HOGENOM" id="CLU_037990_0_0_6"/>
<dbReference type="OrthoDB" id="9808140at2"/>
<dbReference type="UniPathway" id="UPA00079">
    <property type="reaction ID" value="UER00169"/>
</dbReference>
<dbReference type="UniPathway" id="UPA00232"/>
<dbReference type="GO" id="GO:0008425">
    <property type="term" value="F:2-methoxy-6-polyprenyl-1,4-benzoquinol methyltransferase activity"/>
    <property type="evidence" value="ECO:0007669"/>
    <property type="project" value="UniProtKB-UniRule"/>
</dbReference>
<dbReference type="GO" id="GO:0043770">
    <property type="term" value="F:demethylmenaquinone methyltransferase activity"/>
    <property type="evidence" value="ECO:0007669"/>
    <property type="project" value="UniProtKB-UniRule"/>
</dbReference>
<dbReference type="GO" id="GO:0009060">
    <property type="term" value="P:aerobic respiration"/>
    <property type="evidence" value="ECO:0007669"/>
    <property type="project" value="UniProtKB-UniRule"/>
</dbReference>
<dbReference type="GO" id="GO:0009234">
    <property type="term" value="P:menaquinone biosynthetic process"/>
    <property type="evidence" value="ECO:0007669"/>
    <property type="project" value="UniProtKB-UniRule"/>
</dbReference>
<dbReference type="GO" id="GO:0032259">
    <property type="term" value="P:methylation"/>
    <property type="evidence" value="ECO:0007669"/>
    <property type="project" value="UniProtKB-KW"/>
</dbReference>
<dbReference type="CDD" id="cd02440">
    <property type="entry name" value="AdoMet_MTases"/>
    <property type="match status" value="1"/>
</dbReference>
<dbReference type="FunFam" id="3.40.50.150:FF:000014">
    <property type="entry name" value="Ubiquinone/menaquinone biosynthesis C-methyltransferase UbiE"/>
    <property type="match status" value="1"/>
</dbReference>
<dbReference type="Gene3D" id="3.40.50.150">
    <property type="entry name" value="Vaccinia Virus protein VP39"/>
    <property type="match status" value="1"/>
</dbReference>
<dbReference type="HAMAP" id="MF_01813">
    <property type="entry name" value="MenG_UbiE_methyltr"/>
    <property type="match status" value="1"/>
</dbReference>
<dbReference type="InterPro" id="IPR029063">
    <property type="entry name" value="SAM-dependent_MTases_sf"/>
</dbReference>
<dbReference type="InterPro" id="IPR004033">
    <property type="entry name" value="UbiE/COQ5_MeTrFase"/>
</dbReference>
<dbReference type="InterPro" id="IPR023576">
    <property type="entry name" value="UbiE/COQ5_MeTrFase_CS"/>
</dbReference>
<dbReference type="NCBIfam" id="TIGR01934">
    <property type="entry name" value="MenG_MenH_UbiE"/>
    <property type="match status" value="1"/>
</dbReference>
<dbReference type="NCBIfam" id="NF001240">
    <property type="entry name" value="PRK00216.1-1"/>
    <property type="match status" value="1"/>
</dbReference>
<dbReference type="NCBIfam" id="NF001244">
    <property type="entry name" value="PRK00216.1-5"/>
    <property type="match status" value="1"/>
</dbReference>
<dbReference type="PANTHER" id="PTHR43591:SF24">
    <property type="entry name" value="2-METHOXY-6-POLYPRENYL-1,4-BENZOQUINOL METHYLASE, MITOCHONDRIAL"/>
    <property type="match status" value="1"/>
</dbReference>
<dbReference type="PANTHER" id="PTHR43591">
    <property type="entry name" value="METHYLTRANSFERASE"/>
    <property type="match status" value="1"/>
</dbReference>
<dbReference type="Pfam" id="PF01209">
    <property type="entry name" value="Ubie_methyltran"/>
    <property type="match status" value="1"/>
</dbReference>
<dbReference type="SUPFAM" id="SSF53335">
    <property type="entry name" value="S-adenosyl-L-methionine-dependent methyltransferases"/>
    <property type="match status" value="1"/>
</dbReference>
<dbReference type="PROSITE" id="PS51608">
    <property type="entry name" value="SAM_MT_UBIE"/>
    <property type="match status" value="1"/>
</dbReference>
<dbReference type="PROSITE" id="PS01183">
    <property type="entry name" value="UBIE_1"/>
    <property type="match status" value="1"/>
</dbReference>
<dbReference type="PROSITE" id="PS01184">
    <property type="entry name" value="UBIE_2"/>
    <property type="match status" value="1"/>
</dbReference>
<keyword id="KW-0474">Menaquinone biosynthesis</keyword>
<keyword id="KW-0489">Methyltransferase</keyword>
<keyword id="KW-0949">S-adenosyl-L-methionine</keyword>
<keyword id="KW-0808">Transferase</keyword>
<keyword id="KW-0831">Ubiquinone biosynthesis</keyword>
<name>UBIE_ECTM1</name>
<organism>
    <name type="scientific">Ectopseudomonas mendocina (strain ymp)</name>
    <name type="common">Pseudomonas mendocina</name>
    <dbReference type="NCBI Taxonomy" id="399739"/>
    <lineage>
        <taxon>Bacteria</taxon>
        <taxon>Pseudomonadati</taxon>
        <taxon>Pseudomonadota</taxon>
        <taxon>Gammaproteobacteria</taxon>
        <taxon>Pseudomonadales</taxon>
        <taxon>Pseudomonadaceae</taxon>
        <taxon>Ectopseudomonas</taxon>
    </lineage>
</organism>
<comment type="function">
    <text evidence="1">Methyltransferase required for the conversion of demethylmenaquinol (DMKH2) to menaquinol (MKH2) and the conversion of 2-polyprenyl-6-methoxy-1,4-benzoquinol (DDMQH2) to 2-polyprenyl-3-methyl-6-methoxy-1,4-benzoquinol (DMQH2).</text>
</comment>
<comment type="catalytic activity">
    <reaction evidence="1">
        <text>a 2-demethylmenaquinol + S-adenosyl-L-methionine = a menaquinol + S-adenosyl-L-homocysteine + H(+)</text>
        <dbReference type="Rhea" id="RHEA:42640"/>
        <dbReference type="Rhea" id="RHEA-COMP:9539"/>
        <dbReference type="Rhea" id="RHEA-COMP:9563"/>
        <dbReference type="ChEBI" id="CHEBI:15378"/>
        <dbReference type="ChEBI" id="CHEBI:18151"/>
        <dbReference type="ChEBI" id="CHEBI:55437"/>
        <dbReference type="ChEBI" id="CHEBI:57856"/>
        <dbReference type="ChEBI" id="CHEBI:59789"/>
        <dbReference type="EC" id="2.1.1.163"/>
    </reaction>
</comment>
<comment type="catalytic activity">
    <reaction evidence="1">
        <text>a 2-methoxy-6-(all-trans-polyprenyl)benzene-1,4-diol + S-adenosyl-L-methionine = a 5-methoxy-2-methyl-3-(all-trans-polyprenyl)benzene-1,4-diol + S-adenosyl-L-homocysteine + H(+)</text>
        <dbReference type="Rhea" id="RHEA:28286"/>
        <dbReference type="Rhea" id="RHEA-COMP:10858"/>
        <dbReference type="Rhea" id="RHEA-COMP:10859"/>
        <dbReference type="ChEBI" id="CHEBI:15378"/>
        <dbReference type="ChEBI" id="CHEBI:57856"/>
        <dbReference type="ChEBI" id="CHEBI:59789"/>
        <dbReference type="ChEBI" id="CHEBI:84166"/>
        <dbReference type="ChEBI" id="CHEBI:84167"/>
        <dbReference type="EC" id="2.1.1.201"/>
    </reaction>
</comment>
<comment type="pathway">
    <text evidence="1">Quinol/quinone metabolism; menaquinone biosynthesis; menaquinol from 1,4-dihydroxy-2-naphthoate: step 2/2.</text>
</comment>
<comment type="pathway">
    <text evidence="1">Cofactor biosynthesis; ubiquinone biosynthesis.</text>
</comment>
<comment type="similarity">
    <text evidence="1">Belongs to the class I-like SAM-binding methyltransferase superfamily. MenG/UbiE family.</text>
</comment>
<feature type="chain" id="PRO_1000056275" description="Ubiquinone/menaquinone biosynthesis C-methyltransferase UbiE">
    <location>
        <begin position="1"/>
        <end position="256"/>
    </location>
</feature>
<feature type="binding site" evidence="1">
    <location>
        <position position="79"/>
    </location>
    <ligand>
        <name>S-adenosyl-L-methionine</name>
        <dbReference type="ChEBI" id="CHEBI:59789"/>
    </ligand>
</feature>
<feature type="binding site" evidence="1">
    <location>
        <position position="100"/>
    </location>
    <ligand>
        <name>S-adenosyl-L-methionine</name>
        <dbReference type="ChEBI" id="CHEBI:59789"/>
    </ligand>
</feature>
<feature type="binding site" evidence="1">
    <location>
        <begin position="128"/>
        <end position="129"/>
    </location>
    <ligand>
        <name>S-adenosyl-L-methionine</name>
        <dbReference type="ChEBI" id="CHEBI:59789"/>
    </ligand>
</feature>